<evidence type="ECO:0000255" key="1">
    <source>
        <dbReference type="HAMAP-Rule" id="MF_00211"/>
    </source>
</evidence>
<comment type="function">
    <text evidence="1">Catalyzes the transfer of the phosphoribosyl group of 5-phosphorylribose-1-pyrophosphate (PRPP) to anthranilate to yield N-(5'-phosphoribosyl)-anthranilate (PRA).</text>
</comment>
<comment type="catalytic activity">
    <reaction evidence="1">
        <text>N-(5-phospho-beta-D-ribosyl)anthranilate + diphosphate = 5-phospho-alpha-D-ribose 1-diphosphate + anthranilate</text>
        <dbReference type="Rhea" id="RHEA:11768"/>
        <dbReference type="ChEBI" id="CHEBI:16567"/>
        <dbReference type="ChEBI" id="CHEBI:18277"/>
        <dbReference type="ChEBI" id="CHEBI:33019"/>
        <dbReference type="ChEBI" id="CHEBI:58017"/>
        <dbReference type="EC" id="2.4.2.18"/>
    </reaction>
</comment>
<comment type="cofactor">
    <cofactor evidence="1">
        <name>Mg(2+)</name>
        <dbReference type="ChEBI" id="CHEBI:18420"/>
    </cofactor>
    <text evidence="1">Binds 2 magnesium ions per monomer.</text>
</comment>
<comment type="pathway">
    <text evidence="1">Amino-acid biosynthesis; L-tryptophan biosynthesis; L-tryptophan from chorismate: step 2/5.</text>
</comment>
<comment type="subunit">
    <text evidence="1">Homodimer.</text>
</comment>
<comment type="similarity">
    <text evidence="1">Belongs to the anthranilate phosphoribosyltransferase family.</text>
</comment>
<name>TRPD_STRT2</name>
<accession>Q5M347</accession>
<organism>
    <name type="scientific">Streptococcus thermophilus (strain ATCC BAA-250 / LMG 18311)</name>
    <dbReference type="NCBI Taxonomy" id="264199"/>
    <lineage>
        <taxon>Bacteria</taxon>
        <taxon>Bacillati</taxon>
        <taxon>Bacillota</taxon>
        <taxon>Bacilli</taxon>
        <taxon>Lactobacillales</taxon>
        <taxon>Streptococcaceae</taxon>
        <taxon>Streptococcus</taxon>
    </lineage>
</organism>
<proteinExistence type="inferred from homology"/>
<protein>
    <recommendedName>
        <fullName evidence="1">Anthranilate phosphoribosyltransferase</fullName>
        <ecNumber evidence="1">2.4.2.18</ecNumber>
    </recommendedName>
</protein>
<sequence length="334" mass="36011">MKEIFLQISNRQDLSQDQVQVVFDRILKNEVSESQIASFLMGLKIKGETSDEITGIVRALKSHATVLPETFTDAMCNCGTGGDQSYSFNISTTACFVLAAGGIRMAKAGNRSISSKSGSADVLEVLGINVAASPEILSKALDEVGLAFIFAQTMHPAMRFIGPARQALGIPTIMNLVGPLANPLDLETQLMGLYRVELQEIVANAIQQLGRKRAVIITGPDNMDEAALYGTNTYTLLEDGHISQHTFTYEDLGMEKVELSDITGGDAKENAEILLSVLRNEASPYLETTVLNIGLGFFANGKAGTIKEGVELARQLIADGSALEKLRKLQEVQV</sequence>
<gene>
    <name evidence="1" type="primary">trpD</name>
    <name type="ordered locus">stu1591</name>
</gene>
<keyword id="KW-0028">Amino-acid biosynthesis</keyword>
<keyword id="KW-0057">Aromatic amino acid biosynthesis</keyword>
<keyword id="KW-0328">Glycosyltransferase</keyword>
<keyword id="KW-0460">Magnesium</keyword>
<keyword id="KW-0479">Metal-binding</keyword>
<keyword id="KW-1185">Reference proteome</keyword>
<keyword id="KW-0808">Transferase</keyword>
<keyword id="KW-0822">Tryptophan biosynthesis</keyword>
<feature type="chain" id="PRO_0000227190" description="Anthranilate phosphoribosyltransferase">
    <location>
        <begin position="1"/>
        <end position="334"/>
    </location>
</feature>
<feature type="binding site" evidence="1">
    <location>
        <position position="79"/>
    </location>
    <ligand>
        <name>5-phospho-alpha-D-ribose 1-diphosphate</name>
        <dbReference type="ChEBI" id="CHEBI:58017"/>
    </ligand>
</feature>
<feature type="binding site" evidence="1">
    <location>
        <position position="79"/>
    </location>
    <ligand>
        <name>anthranilate</name>
        <dbReference type="ChEBI" id="CHEBI:16567"/>
        <label>1</label>
    </ligand>
</feature>
<feature type="binding site" evidence="1">
    <location>
        <begin position="82"/>
        <end position="83"/>
    </location>
    <ligand>
        <name>5-phospho-alpha-D-ribose 1-diphosphate</name>
        <dbReference type="ChEBI" id="CHEBI:58017"/>
    </ligand>
</feature>
<feature type="binding site" evidence="1">
    <location>
        <position position="87"/>
    </location>
    <ligand>
        <name>5-phospho-alpha-D-ribose 1-diphosphate</name>
        <dbReference type="ChEBI" id="CHEBI:58017"/>
    </ligand>
</feature>
<feature type="binding site" evidence="1">
    <location>
        <begin position="89"/>
        <end position="92"/>
    </location>
    <ligand>
        <name>5-phospho-alpha-D-ribose 1-diphosphate</name>
        <dbReference type="ChEBI" id="CHEBI:58017"/>
    </ligand>
</feature>
<feature type="binding site" evidence="1">
    <location>
        <position position="91"/>
    </location>
    <ligand>
        <name>Mg(2+)</name>
        <dbReference type="ChEBI" id="CHEBI:18420"/>
        <label>1</label>
    </ligand>
</feature>
<feature type="binding site" evidence="1">
    <location>
        <begin position="107"/>
        <end position="115"/>
    </location>
    <ligand>
        <name>5-phospho-alpha-D-ribose 1-diphosphate</name>
        <dbReference type="ChEBI" id="CHEBI:58017"/>
    </ligand>
</feature>
<feature type="binding site" evidence="1">
    <location>
        <position position="110"/>
    </location>
    <ligand>
        <name>anthranilate</name>
        <dbReference type="ChEBI" id="CHEBI:16567"/>
        <label>1</label>
    </ligand>
</feature>
<feature type="binding site" evidence="1">
    <location>
        <position position="119"/>
    </location>
    <ligand>
        <name>5-phospho-alpha-D-ribose 1-diphosphate</name>
        <dbReference type="ChEBI" id="CHEBI:58017"/>
    </ligand>
</feature>
<feature type="binding site" evidence="1">
    <location>
        <position position="165"/>
    </location>
    <ligand>
        <name>anthranilate</name>
        <dbReference type="ChEBI" id="CHEBI:16567"/>
        <label>2</label>
    </ligand>
</feature>
<feature type="binding site" evidence="1">
    <location>
        <position position="224"/>
    </location>
    <ligand>
        <name>Mg(2+)</name>
        <dbReference type="ChEBI" id="CHEBI:18420"/>
        <label>2</label>
    </ligand>
</feature>
<feature type="binding site" evidence="1">
    <location>
        <position position="225"/>
    </location>
    <ligand>
        <name>Mg(2+)</name>
        <dbReference type="ChEBI" id="CHEBI:18420"/>
        <label>1</label>
    </ligand>
</feature>
<feature type="binding site" evidence="1">
    <location>
        <position position="225"/>
    </location>
    <ligand>
        <name>Mg(2+)</name>
        <dbReference type="ChEBI" id="CHEBI:18420"/>
        <label>2</label>
    </ligand>
</feature>
<reference key="1">
    <citation type="journal article" date="2004" name="Nat. Biotechnol.">
        <title>Complete sequence and comparative genome analysis of the dairy bacterium Streptococcus thermophilus.</title>
        <authorList>
            <person name="Bolotin A."/>
            <person name="Quinquis B."/>
            <person name="Renault P."/>
            <person name="Sorokin A."/>
            <person name="Ehrlich S.D."/>
            <person name="Kulakauskas S."/>
            <person name="Lapidus A."/>
            <person name="Goltsman E."/>
            <person name="Mazur M."/>
            <person name="Pusch G.D."/>
            <person name="Fonstein M."/>
            <person name="Overbeek R."/>
            <person name="Kyprides N."/>
            <person name="Purnelle B."/>
            <person name="Prozzi D."/>
            <person name="Ngui K."/>
            <person name="Masuy D."/>
            <person name="Hancy F."/>
            <person name="Burteau S."/>
            <person name="Boutry M."/>
            <person name="Delcour J."/>
            <person name="Goffeau A."/>
            <person name="Hols P."/>
        </authorList>
    </citation>
    <scope>NUCLEOTIDE SEQUENCE [LARGE SCALE GENOMIC DNA]</scope>
    <source>
        <strain>ATCC BAA-250 / LMG 18311</strain>
    </source>
</reference>
<dbReference type="EC" id="2.4.2.18" evidence="1"/>
<dbReference type="EMBL" id="CP000023">
    <property type="protein sequence ID" value="AAV61194.1"/>
    <property type="molecule type" value="Genomic_DNA"/>
</dbReference>
<dbReference type="RefSeq" id="WP_011226424.1">
    <property type="nucleotide sequence ID" value="NC_006448.1"/>
</dbReference>
<dbReference type="SMR" id="Q5M347"/>
<dbReference type="STRING" id="264199.stu1591"/>
<dbReference type="GeneID" id="66899337"/>
<dbReference type="KEGG" id="stl:stu1591"/>
<dbReference type="PATRIC" id="fig|264199.4.peg.1563"/>
<dbReference type="eggNOG" id="COG0547">
    <property type="taxonomic scope" value="Bacteria"/>
</dbReference>
<dbReference type="HOGENOM" id="CLU_034315_2_1_9"/>
<dbReference type="UniPathway" id="UPA00035">
    <property type="reaction ID" value="UER00041"/>
</dbReference>
<dbReference type="Proteomes" id="UP000001170">
    <property type="component" value="Chromosome"/>
</dbReference>
<dbReference type="GO" id="GO:0005829">
    <property type="term" value="C:cytosol"/>
    <property type="evidence" value="ECO:0007669"/>
    <property type="project" value="TreeGrafter"/>
</dbReference>
<dbReference type="GO" id="GO:0004048">
    <property type="term" value="F:anthranilate phosphoribosyltransferase activity"/>
    <property type="evidence" value="ECO:0007669"/>
    <property type="project" value="UniProtKB-UniRule"/>
</dbReference>
<dbReference type="GO" id="GO:0000287">
    <property type="term" value="F:magnesium ion binding"/>
    <property type="evidence" value="ECO:0007669"/>
    <property type="project" value="UniProtKB-UniRule"/>
</dbReference>
<dbReference type="GO" id="GO:0000162">
    <property type="term" value="P:L-tryptophan biosynthetic process"/>
    <property type="evidence" value="ECO:0007669"/>
    <property type="project" value="UniProtKB-UniRule"/>
</dbReference>
<dbReference type="FunFam" id="3.40.1030.10:FF:000002">
    <property type="entry name" value="Anthranilate phosphoribosyltransferase"/>
    <property type="match status" value="1"/>
</dbReference>
<dbReference type="Gene3D" id="3.40.1030.10">
    <property type="entry name" value="Nucleoside phosphorylase/phosphoribosyltransferase catalytic domain"/>
    <property type="match status" value="1"/>
</dbReference>
<dbReference type="Gene3D" id="1.20.970.10">
    <property type="entry name" value="Transferase, Pyrimidine Nucleoside Phosphorylase, Chain C"/>
    <property type="match status" value="1"/>
</dbReference>
<dbReference type="HAMAP" id="MF_00211">
    <property type="entry name" value="TrpD"/>
    <property type="match status" value="1"/>
</dbReference>
<dbReference type="InterPro" id="IPR005940">
    <property type="entry name" value="Anthranilate_Pribosyl_Tfrase"/>
</dbReference>
<dbReference type="InterPro" id="IPR000312">
    <property type="entry name" value="Glycosyl_Trfase_fam3"/>
</dbReference>
<dbReference type="InterPro" id="IPR017459">
    <property type="entry name" value="Glycosyl_Trfase_fam3_N_dom"/>
</dbReference>
<dbReference type="InterPro" id="IPR036320">
    <property type="entry name" value="Glycosyl_Trfase_fam3_N_dom_sf"/>
</dbReference>
<dbReference type="InterPro" id="IPR035902">
    <property type="entry name" value="Nuc_phospho_transferase"/>
</dbReference>
<dbReference type="NCBIfam" id="TIGR01245">
    <property type="entry name" value="trpD"/>
    <property type="match status" value="1"/>
</dbReference>
<dbReference type="PANTHER" id="PTHR43285">
    <property type="entry name" value="ANTHRANILATE PHOSPHORIBOSYLTRANSFERASE"/>
    <property type="match status" value="1"/>
</dbReference>
<dbReference type="PANTHER" id="PTHR43285:SF2">
    <property type="entry name" value="ANTHRANILATE PHOSPHORIBOSYLTRANSFERASE"/>
    <property type="match status" value="1"/>
</dbReference>
<dbReference type="Pfam" id="PF02885">
    <property type="entry name" value="Glycos_trans_3N"/>
    <property type="match status" value="1"/>
</dbReference>
<dbReference type="Pfam" id="PF00591">
    <property type="entry name" value="Glycos_transf_3"/>
    <property type="match status" value="1"/>
</dbReference>
<dbReference type="SUPFAM" id="SSF52418">
    <property type="entry name" value="Nucleoside phosphorylase/phosphoribosyltransferase catalytic domain"/>
    <property type="match status" value="1"/>
</dbReference>
<dbReference type="SUPFAM" id="SSF47648">
    <property type="entry name" value="Nucleoside phosphorylase/phosphoribosyltransferase N-terminal domain"/>
    <property type="match status" value="1"/>
</dbReference>